<proteinExistence type="inferred from homology"/>
<sequence>MTATTETAPVAPPAEPAAAKKTKKQQPKKVAGGAKAKKPSGPSASELIVKAVSSSKERSGVSLAALKKALAAGGYDVDKNNSRLKLALKALVTKGTLTQVKGSGASGSFKLNKKQLETKDKAAKKKPAAPKAKKTAAGAKKAPKSPKKPKKVSAAAKSPKKVKKLAKAAKSPKKPKAVKAKKVAKSPAKKATKPKTAKSPAKAKVAKPKAAKAKKPAPKK</sequence>
<dbReference type="EMBL" id="X03017">
    <property type="protein sequence ID" value="CAA26812.1"/>
    <property type="molecule type" value="Genomic_DNA"/>
</dbReference>
<dbReference type="EMBL" id="M21286">
    <property type="protein sequence ID" value="AAA49764.1"/>
    <property type="molecule type" value="Genomic_DNA"/>
</dbReference>
<dbReference type="PIR" id="D24510">
    <property type="entry name" value="HSXL1B"/>
</dbReference>
<dbReference type="PIR" id="I51447">
    <property type="entry name" value="I51447"/>
</dbReference>
<dbReference type="RefSeq" id="XP_018118224.1">
    <property type="nucleotide sequence ID" value="XM_018262735.2"/>
</dbReference>
<dbReference type="SMR" id="P06893"/>
<dbReference type="GeneID" id="108716538"/>
<dbReference type="KEGG" id="xla:108716538"/>
<dbReference type="OMA" id="HKEEART"/>
<dbReference type="OrthoDB" id="9634976at2759"/>
<dbReference type="Proteomes" id="UP000186698">
    <property type="component" value="Chromosome 5L"/>
</dbReference>
<dbReference type="Bgee" id="108716538">
    <property type="expression patterns" value="Expressed in oocyte and 7 other cell types or tissues"/>
</dbReference>
<dbReference type="GO" id="GO:0000786">
    <property type="term" value="C:nucleosome"/>
    <property type="evidence" value="ECO:0007669"/>
    <property type="project" value="InterPro"/>
</dbReference>
<dbReference type="GO" id="GO:0005634">
    <property type="term" value="C:nucleus"/>
    <property type="evidence" value="ECO:0007669"/>
    <property type="project" value="UniProtKB-SubCell"/>
</dbReference>
<dbReference type="GO" id="GO:0003677">
    <property type="term" value="F:DNA binding"/>
    <property type="evidence" value="ECO:0007669"/>
    <property type="project" value="UniProtKB-KW"/>
</dbReference>
<dbReference type="GO" id="GO:0030527">
    <property type="term" value="F:structural constituent of chromatin"/>
    <property type="evidence" value="ECO:0007669"/>
    <property type="project" value="InterPro"/>
</dbReference>
<dbReference type="GO" id="GO:0006334">
    <property type="term" value="P:nucleosome assembly"/>
    <property type="evidence" value="ECO:0007669"/>
    <property type="project" value="InterPro"/>
</dbReference>
<dbReference type="CDD" id="cd00073">
    <property type="entry name" value="H15"/>
    <property type="match status" value="1"/>
</dbReference>
<dbReference type="FunFam" id="1.10.10.10:FF:000075">
    <property type="entry name" value="Histone H1 like"/>
    <property type="match status" value="1"/>
</dbReference>
<dbReference type="Gene3D" id="1.10.10.10">
    <property type="entry name" value="Winged helix-like DNA-binding domain superfamily/Winged helix DNA-binding domain"/>
    <property type="match status" value="1"/>
</dbReference>
<dbReference type="InterPro" id="IPR005819">
    <property type="entry name" value="H1/H5"/>
</dbReference>
<dbReference type="InterPro" id="IPR005818">
    <property type="entry name" value="Histone_H1/H5_H15"/>
</dbReference>
<dbReference type="InterPro" id="IPR036388">
    <property type="entry name" value="WH-like_DNA-bd_sf"/>
</dbReference>
<dbReference type="InterPro" id="IPR036390">
    <property type="entry name" value="WH_DNA-bd_sf"/>
</dbReference>
<dbReference type="Pfam" id="PF00538">
    <property type="entry name" value="Linker_histone"/>
    <property type="match status" value="1"/>
</dbReference>
<dbReference type="PRINTS" id="PR00624">
    <property type="entry name" value="HISTONEH5"/>
</dbReference>
<dbReference type="SMART" id="SM00526">
    <property type="entry name" value="H15"/>
    <property type="match status" value="1"/>
</dbReference>
<dbReference type="SUPFAM" id="SSF46785">
    <property type="entry name" value="Winged helix' DNA-binding domain"/>
    <property type="match status" value="1"/>
</dbReference>
<dbReference type="PROSITE" id="PS51504">
    <property type="entry name" value="H15"/>
    <property type="match status" value="1"/>
</dbReference>
<protein>
    <recommendedName>
        <fullName>Histone H1B</fullName>
    </recommendedName>
</protein>
<reference key="1">
    <citation type="journal article" date="1985" name="J. Mol. Biol.">
        <title>Genomic organization and nucleotide sequence of two distinct histone gene clusters from Xenopus laevis. Identification of novel conserved upstream sequence elements.</title>
        <authorList>
            <person name="Perry M."/>
            <person name="Thomsen G.H."/>
            <person name="Roeder R.G."/>
        </authorList>
    </citation>
    <scope>NUCLEOTIDE SEQUENCE [GENOMIC DNA] (GENE CLUSTER X1H1)</scope>
</reference>
<reference key="2">
    <citation type="journal article" date="1985" name="J. Biol. Chem.">
        <title>Genomic organization and nucleotide sequence of two distinct histone gene clusters from Xenopus laevis: identification of novel conserved upstream sequence elements.</title>
        <authorList>
            <person name="Perry M."/>
            <person name="Thomsen G.H."/>
            <person name="Roeder R.G."/>
        </authorList>
    </citation>
    <scope>NUCLEOTIDE SEQUENCE [GENOMIC DNA]</scope>
</reference>
<keyword id="KW-0158">Chromosome</keyword>
<keyword id="KW-0238">DNA-binding</keyword>
<keyword id="KW-0539">Nucleus</keyword>
<keyword id="KW-1185">Reference proteome</keyword>
<comment type="function">
    <text>Histones H1 are necessary for the condensation of nucleosome chains into higher-order structures.</text>
</comment>
<comment type="subcellular location">
    <subcellularLocation>
        <location>Nucleus</location>
    </subcellularLocation>
    <subcellularLocation>
        <location>Chromosome</location>
    </subcellularLocation>
</comment>
<comment type="similarity">
    <text evidence="1">Belongs to the histone H1/H5 family.</text>
</comment>
<feature type="initiator methionine" description="Removed" evidence="3">
    <location>
        <position position="1"/>
    </location>
</feature>
<feature type="chain" id="PRO_0000195934" description="Histone H1B">
    <location>
        <begin position="2"/>
        <end position="220"/>
    </location>
</feature>
<feature type="domain" description="H15" evidence="1">
    <location>
        <begin position="40"/>
        <end position="113"/>
    </location>
</feature>
<feature type="region of interest" description="Disordered" evidence="2">
    <location>
        <begin position="1"/>
        <end position="45"/>
    </location>
</feature>
<feature type="region of interest" description="Disordered" evidence="2">
    <location>
        <begin position="99"/>
        <end position="220"/>
    </location>
</feature>
<feature type="compositionally biased region" description="Low complexity" evidence="2">
    <location>
        <begin position="28"/>
        <end position="45"/>
    </location>
</feature>
<feature type="compositionally biased region" description="Basic residues" evidence="2">
    <location>
        <begin position="122"/>
        <end position="134"/>
    </location>
</feature>
<feature type="compositionally biased region" description="Basic residues" evidence="2">
    <location>
        <begin position="141"/>
        <end position="151"/>
    </location>
</feature>
<feature type="compositionally biased region" description="Basic residues" evidence="2">
    <location>
        <begin position="158"/>
        <end position="196"/>
    </location>
</feature>
<feature type="compositionally biased region" description="Basic residues" evidence="2">
    <location>
        <begin position="204"/>
        <end position="220"/>
    </location>
</feature>
<name>H1B_XENLA</name>
<evidence type="ECO:0000255" key="1">
    <source>
        <dbReference type="PROSITE-ProRule" id="PRU00837"/>
    </source>
</evidence>
<evidence type="ECO:0000256" key="2">
    <source>
        <dbReference type="SAM" id="MobiDB-lite"/>
    </source>
</evidence>
<evidence type="ECO:0000305" key="3"/>
<accession>P06893</accession>
<organism>
    <name type="scientific">Xenopus laevis</name>
    <name type="common">African clawed frog</name>
    <dbReference type="NCBI Taxonomy" id="8355"/>
    <lineage>
        <taxon>Eukaryota</taxon>
        <taxon>Metazoa</taxon>
        <taxon>Chordata</taxon>
        <taxon>Craniata</taxon>
        <taxon>Vertebrata</taxon>
        <taxon>Euteleostomi</taxon>
        <taxon>Amphibia</taxon>
        <taxon>Batrachia</taxon>
        <taxon>Anura</taxon>
        <taxon>Pipoidea</taxon>
        <taxon>Pipidae</taxon>
        <taxon>Xenopodinae</taxon>
        <taxon>Xenopus</taxon>
        <taxon>Xenopus</taxon>
    </lineage>
</organism>